<protein>
    <recommendedName>
        <fullName evidence="5">Cytochrome P450 monooxygenase fumoB</fullName>
        <ecNumber evidence="7">1.-.-.-</ecNumber>
    </recommendedName>
    <alternativeName>
        <fullName evidence="5">Fumosorinone biosynthesis cluster protein B</fullName>
    </alternativeName>
</protein>
<gene>
    <name evidence="5" type="primary">fumoB</name>
    <name type="ORF">ISF_08692</name>
</gene>
<evidence type="ECO:0000250" key="1">
    <source>
        <dbReference type="UniProtKB" id="P04798"/>
    </source>
</evidence>
<evidence type="ECO:0000255" key="2"/>
<evidence type="ECO:0000255" key="3">
    <source>
        <dbReference type="PROSITE-ProRule" id="PRU00498"/>
    </source>
</evidence>
<evidence type="ECO:0000269" key="4">
    <source>
    </source>
</evidence>
<evidence type="ECO:0000303" key="5">
    <source>
    </source>
</evidence>
<evidence type="ECO:0000305" key="6"/>
<evidence type="ECO:0000305" key="7">
    <source>
    </source>
</evidence>
<organism>
    <name type="scientific">Cordyceps fumosorosea (strain ARSEF 2679)</name>
    <name type="common">Isaria fumosorosea</name>
    <dbReference type="NCBI Taxonomy" id="1081104"/>
    <lineage>
        <taxon>Eukaryota</taxon>
        <taxon>Fungi</taxon>
        <taxon>Dikarya</taxon>
        <taxon>Ascomycota</taxon>
        <taxon>Pezizomycotina</taxon>
        <taxon>Sordariomycetes</taxon>
        <taxon>Hypocreomycetidae</taxon>
        <taxon>Hypocreales</taxon>
        <taxon>Cordycipitaceae</taxon>
        <taxon>Cordyceps</taxon>
    </lineage>
</organism>
<name>FUMOB_CORFA</name>
<dbReference type="EC" id="1.-.-.-" evidence="7"/>
<dbReference type="EMBL" id="KP737857">
    <property type="protein sequence ID" value="AKC54421.1"/>
    <property type="molecule type" value="Genomic_DNA"/>
</dbReference>
<dbReference type="EMBL" id="AZHB01000034">
    <property type="protein sequence ID" value="OAA53531.1"/>
    <property type="molecule type" value="Genomic_DNA"/>
</dbReference>
<dbReference type="RefSeq" id="XP_018700482.1">
    <property type="nucleotide sequence ID" value="XM_018852295.1"/>
</dbReference>
<dbReference type="SMR" id="A0A167LUR6"/>
<dbReference type="STRING" id="1081104.A0A167LUR6"/>
<dbReference type="GlyCosmos" id="A0A167LUR6">
    <property type="glycosylation" value="1 site, No reported glycans"/>
</dbReference>
<dbReference type="GeneID" id="30024984"/>
<dbReference type="OrthoDB" id="1844152at2759"/>
<dbReference type="Proteomes" id="UP000076744">
    <property type="component" value="Unassembled WGS sequence"/>
</dbReference>
<dbReference type="GO" id="GO:0016020">
    <property type="term" value="C:membrane"/>
    <property type="evidence" value="ECO:0007669"/>
    <property type="project" value="UniProtKB-SubCell"/>
</dbReference>
<dbReference type="GO" id="GO:0020037">
    <property type="term" value="F:heme binding"/>
    <property type="evidence" value="ECO:0007669"/>
    <property type="project" value="InterPro"/>
</dbReference>
<dbReference type="GO" id="GO:0005506">
    <property type="term" value="F:iron ion binding"/>
    <property type="evidence" value="ECO:0007669"/>
    <property type="project" value="InterPro"/>
</dbReference>
<dbReference type="GO" id="GO:0004497">
    <property type="term" value="F:monooxygenase activity"/>
    <property type="evidence" value="ECO:0007669"/>
    <property type="project" value="UniProtKB-KW"/>
</dbReference>
<dbReference type="GO" id="GO:0016705">
    <property type="term" value="F:oxidoreductase activity, acting on paired donors, with incorporation or reduction of molecular oxygen"/>
    <property type="evidence" value="ECO:0007669"/>
    <property type="project" value="InterPro"/>
</dbReference>
<dbReference type="GO" id="GO:0019748">
    <property type="term" value="P:secondary metabolic process"/>
    <property type="evidence" value="ECO:0007669"/>
    <property type="project" value="UniProtKB-ARBA"/>
</dbReference>
<dbReference type="CDD" id="cd11041">
    <property type="entry name" value="CYP503A1-like"/>
    <property type="match status" value="1"/>
</dbReference>
<dbReference type="Gene3D" id="1.10.630.10">
    <property type="entry name" value="Cytochrome P450"/>
    <property type="match status" value="1"/>
</dbReference>
<dbReference type="InterPro" id="IPR001128">
    <property type="entry name" value="Cyt_P450"/>
</dbReference>
<dbReference type="InterPro" id="IPR017972">
    <property type="entry name" value="Cyt_P450_CS"/>
</dbReference>
<dbReference type="InterPro" id="IPR002403">
    <property type="entry name" value="Cyt_P450_E_grp-IV"/>
</dbReference>
<dbReference type="InterPro" id="IPR036396">
    <property type="entry name" value="Cyt_P450_sf"/>
</dbReference>
<dbReference type="PANTHER" id="PTHR46206">
    <property type="entry name" value="CYTOCHROME P450"/>
    <property type="match status" value="1"/>
</dbReference>
<dbReference type="PANTHER" id="PTHR46206:SF1">
    <property type="entry name" value="P450, PUTATIVE (EUROFUNG)-RELATED"/>
    <property type="match status" value="1"/>
</dbReference>
<dbReference type="Pfam" id="PF00067">
    <property type="entry name" value="p450"/>
    <property type="match status" value="1"/>
</dbReference>
<dbReference type="PRINTS" id="PR00465">
    <property type="entry name" value="EP450IV"/>
</dbReference>
<dbReference type="SUPFAM" id="SSF48264">
    <property type="entry name" value="Cytochrome P450"/>
    <property type="match status" value="1"/>
</dbReference>
<dbReference type="PROSITE" id="PS00086">
    <property type="entry name" value="CYTOCHROME_P450"/>
    <property type="match status" value="1"/>
</dbReference>
<proteinExistence type="inferred from homology"/>
<reference key="1">
    <citation type="journal article" date="2015" name="Fungal Genet. Biol.">
        <title>Structure and biosynthesis of fumosorinone, a new protein tyrosine phosphatase 1B inhibitor firstly isolated from the entomogenous fungus Isaria fumosorosea.</title>
        <authorList>
            <person name="Liu L."/>
            <person name="Zhang J."/>
            <person name="Chen C."/>
            <person name="Teng J."/>
            <person name="Wang C."/>
            <person name="Luo D."/>
        </authorList>
    </citation>
    <scope>NUCLEOTIDE SEQUENCE [GENOMIC DNA]</scope>
    <scope>FUNCTION</scope>
    <scope>PATHWAY</scope>
    <source>
        <strain>ARSEF 2679</strain>
    </source>
</reference>
<reference key="2">
    <citation type="journal article" date="2016" name="Genome Biol. Evol.">
        <title>Divergent and convergent evolution of fungal pathogenicity.</title>
        <authorList>
            <person name="Shang Y."/>
            <person name="Xiao G."/>
            <person name="Zheng P."/>
            <person name="Cen K."/>
            <person name="Zhan S."/>
            <person name="Wang C."/>
        </authorList>
    </citation>
    <scope>NUCLEOTIDE SEQUENCE [LARGE SCALE GENOMIC DNA]</scope>
    <source>
        <strain>ARSEF 2679</strain>
    </source>
</reference>
<accession>A0A167LUR6</accession>
<accession>A0A0E3Y591</accession>
<comment type="function">
    <text evidence="4 6 7">Cytochrome P450 monooxygenase; part of the gene cluster that mediates the biosynthesis of fumosorinone, a 2-pyridone alkaloid that acts as an inhibitor of protein tyrosine phosphatase 1B which is implicated asa negative regulator of insulin receptor signaling and a potential drug target for the treatment of type II diabetes and other associated metabolic syndromes (PubMed:25857260). The polyketide-amino acid backbone of fumosorinone is first assembled by the PKS-NRPS hybrid fumoS (PubMed:25857260). The PKS modules condense one acetyl-CoA starter unit with 7 malonyl-CoA units, programmed C-methylations occurring after the first 3 and the sixth extensions, and cycles of full reduction occurring after the first 2 extensions (Probable). Because fumoS lacks a designated enoyl reductase (ER) domain, the required activity is provided the enoyl reductase fumoC (Probable). Upon formation of the polyketide backbone on the thiotemplate, the polyketide is transferred to the NRPS module and linked to tyrosine to produce the acyltetramic acid intermediate called prefumosorinone A (Probable). The cytochrome P450 monooxygenase fumoA then probably catalyzes an unprecedented oxidative ring expansion of prefumosorinone A to form prefumosorinone B which contains the 2-pyridone core of fumosorinone (Probable). The cytochrome P450 monooxygenase fumoB might hydroxylate the nitrogen of prefumosorinone B, but not the acyltetramic acid prefumosorinone A, to form fumosorinone (Probable).</text>
</comment>
<comment type="cofactor">
    <cofactor evidence="1">
        <name>heme</name>
        <dbReference type="ChEBI" id="CHEBI:30413"/>
    </cofactor>
</comment>
<comment type="pathway">
    <text evidence="4">Secondary metabolite biosynthesis.</text>
</comment>
<comment type="subcellular location">
    <subcellularLocation>
        <location evidence="2">Membrane</location>
        <topology evidence="2">Single-pass membrane protein</topology>
    </subcellularLocation>
</comment>
<comment type="similarity">
    <text evidence="6">Belongs to the cytochrome P450 family.</text>
</comment>
<feature type="chain" id="PRO_0000451334" description="Cytochrome P450 monooxygenase fumoB">
    <location>
        <begin position="1"/>
        <end position="546"/>
    </location>
</feature>
<feature type="transmembrane region" description="Helical" evidence="2">
    <location>
        <begin position="13"/>
        <end position="33"/>
    </location>
</feature>
<feature type="binding site" description="axial binding residue" evidence="1">
    <location>
        <position position="488"/>
    </location>
    <ligand>
        <name>heme</name>
        <dbReference type="ChEBI" id="CHEBI:30413"/>
    </ligand>
    <ligandPart>
        <name>Fe</name>
        <dbReference type="ChEBI" id="CHEBI:18248"/>
    </ligandPart>
</feature>
<feature type="glycosylation site" description="N-linked (GlcNAc...) asparagine" evidence="3">
    <location>
        <position position="147"/>
    </location>
</feature>
<sequence>MALSAAASTLARLGYYEKLAGILGIIGLVLLFWQRTRQPFYPDLPLAGETPHRRWFSLRTRFRYYTDCASLFNEAYHTVRFHASTSSSSTLSRLNAHASQYTKHGKGVLLPSVGVHTAVVMPESALDWAMSQPDSALSITHAFADLNQTRYSLGDARYWRDPWQLTLVKAHLAAVTPALVPQLNDELADALAKRLGTDTDSWREMELETTLRRVVAQTLSRLIVGPELCRDEGYLDLAYKVVLGVMTTIFATLPYPDLVRAVTGPLASWHTQRRISRIQRHLEPLYRERLAILRSAKEDQPPDLLMAMMRFAQKKRPEELADPAIIARRVCAANFVAMHQTTIVLTNIILHVLGSDAEFSTIAALRSEAAAHLLSSERITKDAFAQMKVADSVAREATRLNFPLGGRASPRTVMRDGLVSPEGIRLQRGTTVSWLAGCAQLDPEAFPEPRRFDPFRFSRGDGDGEGERDTFVKTSARYLPWGHGKHACPGRFVVDYVVKMALAQLVTKYDLAWPEDYGGKQPPSVWLAELSVPPPRARIMVRRRKV</sequence>
<keyword id="KW-0325">Glycoprotein</keyword>
<keyword id="KW-0349">Heme</keyword>
<keyword id="KW-0408">Iron</keyword>
<keyword id="KW-0472">Membrane</keyword>
<keyword id="KW-0479">Metal-binding</keyword>
<keyword id="KW-0503">Monooxygenase</keyword>
<keyword id="KW-0560">Oxidoreductase</keyword>
<keyword id="KW-1185">Reference proteome</keyword>
<keyword id="KW-0812">Transmembrane</keyword>
<keyword id="KW-1133">Transmembrane helix</keyword>